<sequence length="440" mass="47089">MSDVSFHDLSSLDATQRSSLLKRAEADLSVFVEKVRPIIQAVKDEGDAALIRFARELDKANVAEGGLQVSEAEFDAAFDKVEKDVVESIGFGIDNIRRFHEEQKPETMWLKEVRPGAYAGDRYTPIASVALYVPRGKGAFPSVTMMTSVPAVIAGVPQIAIVTPPTSDGSVDAATLVAARLAGVHTVYKCGGAQAVAAVAYGTETVKPALKIVGPGSPWVVAAKSELSSIINTGLPAGPSEAIIFADDSVDGGLAALDLLIEAEHGPDSSAYLVTHSRKVAEAALAALPQHWSRMTEQRVEFSRAVLTGKRGGIVLTASLEDSYRFINDYAPEHLEILSKEPFAHLGHITEAAEILMGPHTPVTLANFVLGPNAVLPTSRWARTYGPLSVTDFVKRSSVGYVTSAAYPELAKHARRLARYEGFSSHENAVSEIRDRYLAG</sequence>
<name>HSXH2_RHILO</name>
<feature type="chain" id="PRO_0000135831" description="Histidinol dehydrogenase homolog 2">
    <location>
        <begin position="1"/>
        <end position="440"/>
    </location>
</feature>
<feature type="active site" description="Proton acceptor" evidence="1">
    <location>
        <position position="333"/>
    </location>
</feature>
<feature type="active site" description="Proton acceptor" evidence="1">
    <location>
        <position position="334"/>
    </location>
</feature>
<feature type="binding site" evidence="1">
    <location>
        <position position="265"/>
    </location>
    <ligand>
        <name>Zn(2+)</name>
        <dbReference type="ChEBI" id="CHEBI:29105"/>
    </ligand>
</feature>
<feature type="binding site" evidence="1">
    <location>
        <position position="426"/>
    </location>
    <ligand>
        <name>Zn(2+)</name>
        <dbReference type="ChEBI" id="CHEBI:29105"/>
    </ligand>
</feature>
<comment type="cofactor">
    <cofactor evidence="1">
        <name>Zn(2+)</name>
        <dbReference type="ChEBI" id="CHEBI:29105"/>
    </cofactor>
    <text evidence="1">Binds 1 zinc ion per subunit.</text>
</comment>
<comment type="similarity">
    <text evidence="2">Belongs to the histidinol dehydrogenase family.</text>
</comment>
<comment type="caution">
    <text evidence="2">The conserved zinc-binding site Asp residue in position 367 is replaced by an Asn.</text>
</comment>
<organism>
    <name type="scientific">Mesorhizobium japonicum (strain LMG 29417 / CECT 9101 / MAFF 303099)</name>
    <name type="common">Mesorhizobium loti (strain MAFF 303099)</name>
    <dbReference type="NCBI Taxonomy" id="266835"/>
    <lineage>
        <taxon>Bacteria</taxon>
        <taxon>Pseudomonadati</taxon>
        <taxon>Pseudomonadota</taxon>
        <taxon>Alphaproteobacteria</taxon>
        <taxon>Hyphomicrobiales</taxon>
        <taxon>Phyllobacteriaceae</taxon>
        <taxon>Mesorhizobium</taxon>
    </lineage>
</organism>
<proteinExistence type="inferred from homology"/>
<accession>Q987C6</accession>
<gene>
    <name type="ordered locus">mlr7107</name>
</gene>
<dbReference type="EC" id="1.1.-.-" evidence="2"/>
<dbReference type="EMBL" id="BA000012">
    <property type="protein sequence ID" value="BAB53277.1"/>
    <property type="molecule type" value="Genomic_DNA"/>
</dbReference>
<dbReference type="RefSeq" id="WP_010914584.1">
    <property type="nucleotide sequence ID" value="NC_002678.2"/>
</dbReference>
<dbReference type="SMR" id="Q987C6"/>
<dbReference type="KEGG" id="mlo:mlr7107"/>
<dbReference type="PATRIC" id="fig|266835.9.peg.5669"/>
<dbReference type="eggNOG" id="COG0141">
    <property type="taxonomic scope" value="Bacteria"/>
</dbReference>
<dbReference type="HOGENOM" id="CLU_006732_3_0_5"/>
<dbReference type="Proteomes" id="UP000000552">
    <property type="component" value="Chromosome"/>
</dbReference>
<dbReference type="GO" id="GO:0005829">
    <property type="term" value="C:cytosol"/>
    <property type="evidence" value="ECO:0007669"/>
    <property type="project" value="TreeGrafter"/>
</dbReference>
<dbReference type="GO" id="GO:0004399">
    <property type="term" value="F:histidinol dehydrogenase activity"/>
    <property type="evidence" value="ECO:0007669"/>
    <property type="project" value="InterPro"/>
</dbReference>
<dbReference type="GO" id="GO:0046872">
    <property type="term" value="F:metal ion binding"/>
    <property type="evidence" value="ECO:0007669"/>
    <property type="project" value="UniProtKB-KW"/>
</dbReference>
<dbReference type="GO" id="GO:0051287">
    <property type="term" value="F:NAD binding"/>
    <property type="evidence" value="ECO:0007669"/>
    <property type="project" value="InterPro"/>
</dbReference>
<dbReference type="GO" id="GO:0000105">
    <property type="term" value="P:L-histidine biosynthetic process"/>
    <property type="evidence" value="ECO:0007669"/>
    <property type="project" value="InterPro"/>
</dbReference>
<dbReference type="CDD" id="cd06572">
    <property type="entry name" value="Histidinol_dh"/>
    <property type="match status" value="1"/>
</dbReference>
<dbReference type="FunFam" id="3.40.50.1980:FF:000001">
    <property type="entry name" value="Histidinol dehydrogenase"/>
    <property type="match status" value="1"/>
</dbReference>
<dbReference type="Gene3D" id="1.20.5.1300">
    <property type="match status" value="1"/>
</dbReference>
<dbReference type="Gene3D" id="3.40.50.1980">
    <property type="entry name" value="Nitrogenase molybdenum iron protein domain"/>
    <property type="match status" value="2"/>
</dbReference>
<dbReference type="InterPro" id="IPR016161">
    <property type="entry name" value="Ald_DH/histidinol_DH"/>
</dbReference>
<dbReference type="InterPro" id="IPR001692">
    <property type="entry name" value="Histidinol_DH_CS"/>
</dbReference>
<dbReference type="InterPro" id="IPR022695">
    <property type="entry name" value="Histidinol_DH_monofunct"/>
</dbReference>
<dbReference type="InterPro" id="IPR012131">
    <property type="entry name" value="Hstdl_DH"/>
</dbReference>
<dbReference type="NCBIfam" id="TIGR00069">
    <property type="entry name" value="hisD"/>
    <property type="match status" value="1"/>
</dbReference>
<dbReference type="PANTHER" id="PTHR21256:SF2">
    <property type="entry name" value="HISTIDINE BIOSYNTHESIS TRIFUNCTIONAL PROTEIN"/>
    <property type="match status" value="1"/>
</dbReference>
<dbReference type="PANTHER" id="PTHR21256">
    <property type="entry name" value="HISTIDINOL DEHYDROGENASE HDH"/>
    <property type="match status" value="1"/>
</dbReference>
<dbReference type="Pfam" id="PF00815">
    <property type="entry name" value="Histidinol_dh"/>
    <property type="match status" value="1"/>
</dbReference>
<dbReference type="PIRSF" id="PIRSF000099">
    <property type="entry name" value="Histidinol_dh"/>
    <property type="match status" value="1"/>
</dbReference>
<dbReference type="PRINTS" id="PR00083">
    <property type="entry name" value="HOLDHDRGNASE"/>
</dbReference>
<dbReference type="SUPFAM" id="SSF53720">
    <property type="entry name" value="ALDH-like"/>
    <property type="match status" value="1"/>
</dbReference>
<dbReference type="PROSITE" id="PS00611">
    <property type="entry name" value="HISOL_DEHYDROGENASE"/>
    <property type="match status" value="1"/>
</dbReference>
<keyword id="KW-0479">Metal-binding</keyword>
<keyword id="KW-0560">Oxidoreductase</keyword>
<keyword id="KW-0862">Zinc</keyword>
<reference key="1">
    <citation type="journal article" date="2000" name="DNA Res.">
        <title>Complete genome structure of the nitrogen-fixing symbiotic bacterium Mesorhizobium loti.</title>
        <authorList>
            <person name="Kaneko T."/>
            <person name="Nakamura Y."/>
            <person name="Sato S."/>
            <person name="Asamizu E."/>
            <person name="Kato T."/>
            <person name="Sasamoto S."/>
            <person name="Watanabe A."/>
            <person name="Idesawa K."/>
            <person name="Ishikawa A."/>
            <person name="Kawashima K."/>
            <person name="Kimura T."/>
            <person name="Kishida Y."/>
            <person name="Kiyokawa C."/>
            <person name="Kohara M."/>
            <person name="Matsumoto M."/>
            <person name="Matsuno A."/>
            <person name="Mochizuki Y."/>
            <person name="Nakayama S."/>
            <person name="Nakazaki N."/>
            <person name="Shimpo S."/>
            <person name="Sugimoto M."/>
            <person name="Takeuchi C."/>
            <person name="Yamada M."/>
            <person name="Tabata S."/>
        </authorList>
    </citation>
    <scope>NUCLEOTIDE SEQUENCE [LARGE SCALE GENOMIC DNA]</scope>
    <source>
        <strain>LMG 29417 / CECT 9101 / MAFF 303099</strain>
    </source>
</reference>
<protein>
    <recommendedName>
        <fullName evidence="2">Histidinol dehydrogenase homolog 2</fullName>
        <ecNumber evidence="2">1.1.-.-</ecNumber>
    </recommendedName>
</protein>
<evidence type="ECO:0000250" key="1">
    <source>
        <dbReference type="UniProtKB" id="P06988"/>
    </source>
</evidence>
<evidence type="ECO:0000305" key="2"/>